<feature type="chain" id="PRO_0000122722" description="Protein RecA">
    <location>
        <begin position="1"/>
        <end position="354"/>
    </location>
</feature>
<feature type="binding site" evidence="1">
    <location>
        <begin position="67"/>
        <end position="74"/>
    </location>
    <ligand>
        <name>ATP</name>
        <dbReference type="ChEBI" id="CHEBI:30616"/>
    </ligand>
</feature>
<gene>
    <name evidence="1" type="primary">recA</name>
    <name type="synonym">rec-1</name>
    <name type="synonym">rec1</name>
    <name type="ordered locus">HI_0600</name>
</gene>
<dbReference type="EMBL" id="L07529">
    <property type="protein sequence ID" value="AAC36817.1"/>
    <property type="molecule type" value="Unassigned_DNA"/>
</dbReference>
<dbReference type="EMBL" id="L42023">
    <property type="protein sequence ID" value="AAC22257.1"/>
    <property type="molecule type" value="Genomic_DNA"/>
</dbReference>
<dbReference type="PIR" id="A49929">
    <property type="entry name" value="A49929"/>
</dbReference>
<dbReference type="RefSeq" id="NP_438757.1">
    <property type="nucleotide sequence ID" value="NC_000907.1"/>
</dbReference>
<dbReference type="SMR" id="P43705"/>
<dbReference type="STRING" id="71421.HI_0600"/>
<dbReference type="EnsemblBacteria" id="AAC22257">
    <property type="protein sequence ID" value="AAC22257"/>
    <property type="gene ID" value="HI_0600"/>
</dbReference>
<dbReference type="KEGG" id="hin:HI_0600"/>
<dbReference type="PATRIC" id="fig|71421.8.peg.621"/>
<dbReference type="eggNOG" id="COG0468">
    <property type="taxonomic scope" value="Bacteria"/>
</dbReference>
<dbReference type="HOGENOM" id="CLU_040469_3_2_6"/>
<dbReference type="OrthoDB" id="9776733at2"/>
<dbReference type="PhylomeDB" id="P43705"/>
<dbReference type="BioCyc" id="HINF71421:G1GJ1-610-MONOMER"/>
<dbReference type="Proteomes" id="UP000000579">
    <property type="component" value="Chromosome"/>
</dbReference>
<dbReference type="GO" id="GO:0005737">
    <property type="term" value="C:cytoplasm"/>
    <property type="evidence" value="ECO:0007669"/>
    <property type="project" value="UniProtKB-SubCell"/>
</dbReference>
<dbReference type="GO" id="GO:0005524">
    <property type="term" value="F:ATP binding"/>
    <property type="evidence" value="ECO:0007669"/>
    <property type="project" value="UniProtKB-UniRule"/>
</dbReference>
<dbReference type="GO" id="GO:0016887">
    <property type="term" value="F:ATP hydrolysis activity"/>
    <property type="evidence" value="ECO:0007669"/>
    <property type="project" value="InterPro"/>
</dbReference>
<dbReference type="GO" id="GO:0140664">
    <property type="term" value="F:ATP-dependent DNA damage sensor activity"/>
    <property type="evidence" value="ECO:0007669"/>
    <property type="project" value="InterPro"/>
</dbReference>
<dbReference type="GO" id="GO:0003684">
    <property type="term" value="F:damaged DNA binding"/>
    <property type="evidence" value="ECO:0007669"/>
    <property type="project" value="UniProtKB-UniRule"/>
</dbReference>
<dbReference type="GO" id="GO:0003697">
    <property type="term" value="F:single-stranded DNA binding"/>
    <property type="evidence" value="ECO:0007669"/>
    <property type="project" value="UniProtKB-UniRule"/>
</dbReference>
<dbReference type="GO" id="GO:0006310">
    <property type="term" value="P:DNA recombination"/>
    <property type="evidence" value="ECO:0007669"/>
    <property type="project" value="UniProtKB-UniRule"/>
</dbReference>
<dbReference type="GO" id="GO:0006281">
    <property type="term" value="P:DNA repair"/>
    <property type="evidence" value="ECO:0007669"/>
    <property type="project" value="UniProtKB-UniRule"/>
</dbReference>
<dbReference type="GO" id="GO:0009432">
    <property type="term" value="P:SOS response"/>
    <property type="evidence" value="ECO:0000270"/>
    <property type="project" value="CollecTF"/>
</dbReference>
<dbReference type="CDD" id="cd00983">
    <property type="entry name" value="RecA"/>
    <property type="match status" value="1"/>
</dbReference>
<dbReference type="FunFam" id="3.40.50.300:FF:000087">
    <property type="entry name" value="Recombinase RecA"/>
    <property type="match status" value="1"/>
</dbReference>
<dbReference type="Gene3D" id="3.40.50.300">
    <property type="entry name" value="P-loop containing nucleotide triphosphate hydrolases"/>
    <property type="match status" value="1"/>
</dbReference>
<dbReference type="HAMAP" id="MF_00268">
    <property type="entry name" value="RecA"/>
    <property type="match status" value="1"/>
</dbReference>
<dbReference type="InterPro" id="IPR003593">
    <property type="entry name" value="AAA+_ATPase"/>
</dbReference>
<dbReference type="InterPro" id="IPR013765">
    <property type="entry name" value="DNA_recomb/repair_RecA"/>
</dbReference>
<dbReference type="InterPro" id="IPR020584">
    <property type="entry name" value="DNA_recomb/repair_RecA_CS"/>
</dbReference>
<dbReference type="InterPro" id="IPR027417">
    <property type="entry name" value="P-loop_NTPase"/>
</dbReference>
<dbReference type="InterPro" id="IPR049261">
    <property type="entry name" value="RecA-like_C"/>
</dbReference>
<dbReference type="InterPro" id="IPR049428">
    <property type="entry name" value="RecA-like_N"/>
</dbReference>
<dbReference type="InterPro" id="IPR020588">
    <property type="entry name" value="RecA_ATP-bd"/>
</dbReference>
<dbReference type="InterPro" id="IPR023400">
    <property type="entry name" value="RecA_C_sf"/>
</dbReference>
<dbReference type="InterPro" id="IPR020587">
    <property type="entry name" value="RecA_monomer-monomer_interface"/>
</dbReference>
<dbReference type="NCBIfam" id="TIGR02012">
    <property type="entry name" value="tigrfam_recA"/>
    <property type="match status" value="1"/>
</dbReference>
<dbReference type="PANTHER" id="PTHR45900:SF1">
    <property type="entry name" value="MITOCHONDRIAL DNA REPAIR PROTEIN RECA HOMOLOG-RELATED"/>
    <property type="match status" value="1"/>
</dbReference>
<dbReference type="PANTHER" id="PTHR45900">
    <property type="entry name" value="RECA"/>
    <property type="match status" value="1"/>
</dbReference>
<dbReference type="Pfam" id="PF00154">
    <property type="entry name" value="RecA"/>
    <property type="match status" value="1"/>
</dbReference>
<dbReference type="Pfam" id="PF21096">
    <property type="entry name" value="RecA_C"/>
    <property type="match status" value="1"/>
</dbReference>
<dbReference type="PRINTS" id="PR00142">
    <property type="entry name" value="RECA"/>
</dbReference>
<dbReference type="SMART" id="SM00382">
    <property type="entry name" value="AAA"/>
    <property type="match status" value="1"/>
</dbReference>
<dbReference type="SUPFAM" id="SSF52540">
    <property type="entry name" value="P-loop containing nucleoside triphosphate hydrolases"/>
    <property type="match status" value="1"/>
</dbReference>
<dbReference type="SUPFAM" id="SSF54752">
    <property type="entry name" value="RecA protein, C-terminal domain"/>
    <property type="match status" value="1"/>
</dbReference>
<dbReference type="PROSITE" id="PS00321">
    <property type="entry name" value="RECA_1"/>
    <property type="match status" value="1"/>
</dbReference>
<dbReference type="PROSITE" id="PS50162">
    <property type="entry name" value="RECA_2"/>
    <property type="match status" value="1"/>
</dbReference>
<dbReference type="PROSITE" id="PS50163">
    <property type="entry name" value="RECA_3"/>
    <property type="match status" value="1"/>
</dbReference>
<name>RECA_HAEIN</name>
<proteinExistence type="inferred from homology"/>
<accession>P43705</accession>
<reference key="1">
    <citation type="journal article" date="1993" name="J. Bacteriol.">
        <title>Structural organization, nucleotide sequence, and regulation of the Haemophilus influenzae rec-1+ gene.</title>
        <authorList>
            <person name="Zulty J.J."/>
            <person name="Barcak G.J."/>
        </authorList>
    </citation>
    <scope>NUCLEOTIDE SEQUENCE [GENOMIC DNA]</scope>
    <source>
        <strain>ATCC 51907 / DSM 11121 / KW20 / Rd</strain>
    </source>
</reference>
<reference key="2">
    <citation type="journal article" date="1995" name="Science">
        <title>Whole-genome random sequencing and assembly of Haemophilus influenzae Rd.</title>
        <authorList>
            <person name="Fleischmann R.D."/>
            <person name="Adams M.D."/>
            <person name="White O."/>
            <person name="Clayton R.A."/>
            <person name="Kirkness E.F."/>
            <person name="Kerlavage A.R."/>
            <person name="Bult C.J."/>
            <person name="Tomb J.-F."/>
            <person name="Dougherty B.A."/>
            <person name="Merrick J.M."/>
            <person name="McKenney K."/>
            <person name="Sutton G.G."/>
            <person name="FitzHugh W."/>
            <person name="Fields C.A."/>
            <person name="Gocayne J.D."/>
            <person name="Scott J.D."/>
            <person name="Shirley R."/>
            <person name="Liu L.-I."/>
            <person name="Glodek A."/>
            <person name="Kelley J.M."/>
            <person name="Weidman J.F."/>
            <person name="Phillips C.A."/>
            <person name="Spriggs T."/>
            <person name="Hedblom E."/>
            <person name="Cotton M.D."/>
            <person name="Utterback T.R."/>
            <person name="Hanna M.C."/>
            <person name="Nguyen D.T."/>
            <person name="Saudek D.M."/>
            <person name="Brandon R.C."/>
            <person name="Fine L.D."/>
            <person name="Fritchman J.L."/>
            <person name="Fuhrmann J.L."/>
            <person name="Geoghagen N.S.M."/>
            <person name="Gnehm C.L."/>
            <person name="McDonald L.A."/>
            <person name="Small K.V."/>
            <person name="Fraser C.M."/>
            <person name="Smith H.O."/>
            <person name="Venter J.C."/>
        </authorList>
    </citation>
    <scope>NUCLEOTIDE SEQUENCE [LARGE SCALE GENOMIC DNA]</scope>
    <source>
        <strain>ATCC 51907 / DSM 11121 / KW20 / Rd</strain>
    </source>
</reference>
<organism>
    <name type="scientific">Haemophilus influenzae (strain ATCC 51907 / DSM 11121 / KW20 / Rd)</name>
    <dbReference type="NCBI Taxonomy" id="71421"/>
    <lineage>
        <taxon>Bacteria</taxon>
        <taxon>Pseudomonadati</taxon>
        <taxon>Pseudomonadota</taxon>
        <taxon>Gammaproteobacteria</taxon>
        <taxon>Pasteurellales</taxon>
        <taxon>Pasteurellaceae</taxon>
        <taxon>Haemophilus</taxon>
    </lineage>
</organism>
<protein>
    <recommendedName>
        <fullName evidence="1">Protein RecA</fullName>
    </recommendedName>
    <alternativeName>
        <fullName>Recombinase 1</fullName>
    </alternativeName>
    <alternativeName>
        <fullName evidence="1">Recombinase A</fullName>
    </alternativeName>
</protein>
<keyword id="KW-0067">ATP-binding</keyword>
<keyword id="KW-0963">Cytoplasm</keyword>
<keyword id="KW-0227">DNA damage</keyword>
<keyword id="KW-0233">DNA recombination</keyword>
<keyword id="KW-0234">DNA repair</keyword>
<keyword id="KW-0238">DNA-binding</keyword>
<keyword id="KW-0547">Nucleotide-binding</keyword>
<keyword id="KW-1185">Reference proteome</keyword>
<keyword id="KW-0742">SOS response</keyword>
<sequence length="354" mass="38133">MATQEEKQKALAAALGQIEKQFGKGSIMKLGDTKTLDVESISTGSLGLDVALGIGGLPMGRIVEIFGPESSGKTTLTLSVIAQAQKAGKTCAFIDAEHALDPIYAAKLGVDVKELFVSQPDNGEQALEICDALVRSGAIDVIIVDSVAALTPKAEIEGDMGDSHMGLQARLMSQALRKLTGQIKNANCLVVFINQIRMKIGVMFGNPETTTGGNALKFYSSVRLDIRRTGSVKDGENIIGNETRVKVVKNKLAAPFRQVDFQILYGEGISKAGELLELGVKHKLVEKSGAWYSYNGEKIGQGKANSMKWLNENIEKSDELEARLRAELVANPEQALMADIEQSENNTESESDFE</sequence>
<comment type="function">
    <text>Can catalyze the hydrolysis of ATP in the presence of single-stranded DNA, the ATP-dependent uptake of single-stranded DNA by duplex DNA, and the ATP-dependent hybridization of homologous single-stranded DNAs. It interacts with LexA causing its activation and leading to its autocatalytic cleavage. Plays a central role in DNA metabolism, participating in general homologous recombination, recombinational (postreplication) DNA repair, and prophage induction.</text>
</comment>
<comment type="subcellular location">
    <subcellularLocation>
        <location evidence="1">Cytoplasm</location>
    </subcellularLocation>
</comment>
<comment type="similarity">
    <text evidence="1">Belongs to the RecA family.</text>
</comment>
<evidence type="ECO:0000255" key="1">
    <source>
        <dbReference type="HAMAP-Rule" id="MF_00268"/>
    </source>
</evidence>